<dbReference type="EC" id="6.3.4.-" evidence="1"/>
<dbReference type="EMBL" id="AP009049">
    <property type="protein sequence ID" value="BAH06336.1"/>
    <property type="molecule type" value="Genomic_DNA"/>
</dbReference>
<dbReference type="RefSeq" id="WP_012101778.1">
    <property type="nucleotide sequence ID" value="NC_011837.1"/>
</dbReference>
<dbReference type="SMR" id="B9E1G1"/>
<dbReference type="KEGG" id="ckr:CKR_1285"/>
<dbReference type="HOGENOM" id="CLU_038915_0_1_9"/>
<dbReference type="Proteomes" id="UP000007969">
    <property type="component" value="Chromosome"/>
</dbReference>
<dbReference type="GO" id="GO:0005737">
    <property type="term" value="C:cytoplasm"/>
    <property type="evidence" value="ECO:0007669"/>
    <property type="project" value="UniProtKB-SubCell"/>
</dbReference>
<dbReference type="GO" id="GO:0005524">
    <property type="term" value="F:ATP binding"/>
    <property type="evidence" value="ECO:0007669"/>
    <property type="project" value="UniProtKB-KW"/>
</dbReference>
<dbReference type="GO" id="GO:0016879">
    <property type="term" value="F:ligase activity, forming carbon-nitrogen bonds"/>
    <property type="evidence" value="ECO:0007669"/>
    <property type="project" value="UniProtKB-UniRule"/>
</dbReference>
<dbReference type="GO" id="GO:0000049">
    <property type="term" value="F:tRNA binding"/>
    <property type="evidence" value="ECO:0007669"/>
    <property type="project" value="UniProtKB-KW"/>
</dbReference>
<dbReference type="GO" id="GO:0006400">
    <property type="term" value="P:tRNA modification"/>
    <property type="evidence" value="ECO:0007669"/>
    <property type="project" value="UniProtKB-UniRule"/>
</dbReference>
<dbReference type="Gene3D" id="3.40.50.620">
    <property type="entry name" value="HUPs"/>
    <property type="match status" value="1"/>
</dbReference>
<dbReference type="HAMAP" id="MF_01539">
    <property type="entry name" value="TmcAL"/>
    <property type="match status" value="1"/>
</dbReference>
<dbReference type="InterPro" id="IPR014729">
    <property type="entry name" value="Rossmann-like_a/b/a_fold"/>
</dbReference>
<dbReference type="InterPro" id="IPR008513">
    <property type="entry name" value="tRNA(Met)_cyd_acetate_ligase"/>
</dbReference>
<dbReference type="NCBIfam" id="NF010191">
    <property type="entry name" value="PRK13670.1"/>
    <property type="match status" value="1"/>
</dbReference>
<dbReference type="PANTHER" id="PTHR37825">
    <property type="entry name" value="TRNA(MET) CYTIDINE ACETATE LIGASE"/>
    <property type="match status" value="1"/>
</dbReference>
<dbReference type="PANTHER" id="PTHR37825:SF1">
    <property type="entry name" value="TRNA(MET) CYTIDINE ACETATE LIGASE"/>
    <property type="match status" value="1"/>
</dbReference>
<dbReference type="Pfam" id="PF05636">
    <property type="entry name" value="HIGH_NTase1"/>
    <property type="match status" value="1"/>
</dbReference>
<dbReference type="SUPFAM" id="SSF52374">
    <property type="entry name" value="Nucleotidylyl transferase"/>
    <property type="match status" value="1"/>
</dbReference>
<proteinExistence type="inferred from homology"/>
<protein>
    <recommendedName>
        <fullName evidence="1">tRNA(Met) cytidine acetate ligase</fullName>
        <ecNumber evidence="1">6.3.4.-</ecNumber>
    </recommendedName>
</protein>
<evidence type="ECO:0000255" key="1">
    <source>
        <dbReference type="HAMAP-Rule" id="MF_01539"/>
    </source>
</evidence>
<sequence>MKITGIIVEYNPFHNGHKYHIKKTRSLTNCEGIIAVISGNFVQRGAPSIVDKWNKTKMALLNGVDLVLELPALYSLSSAEFFAYGAVSLLENLGVVKNLCFGSECEDIKLLTLMGKILYEEPEELKLTLKERLHQGMSYASARGNALKEFLCHRYSLKNNSITEMLHLPNNILAIEYCKSLARLKSTINPVSIKRIGNSYNSTYINNRFSSATSIRNFLKENNSLQELEKALPYNILCILKDLSHSNYRFTFEDSLLPYLKYKNLFYGKNIKYLPDVSEGLENRIESALKNASSYDQIINYAKTKRYAYSRISRILCQFFLGFENLDTKVLRKNRCPYARVLGFNNKGMEILKKIKQNSSIPVYTKLPKNANDMLKLDLMATKGYSLLNKNIAFNQDYISSPLIIDKI</sequence>
<name>TMCAL_CLOK1</name>
<accession>B9E1G1</accession>
<feature type="chain" id="PRO_1000185218" description="tRNA(Met) cytidine acetate ligase">
    <location>
        <begin position="1"/>
        <end position="408"/>
    </location>
</feature>
<feature type="binding site" evidence="1">
    <location>
        <begin position="7"/>
        <end position="20"/>
    </location>
    <ligand>
        <name>ATP</name>
        <dbReference type="ChEBI" id="CHEBI:30616"/>
    </ligand>
</feature>
<feature type="binding site" evidence="1">
    <location>
        <position position="102"/>
    </location>
    <ligand>
        <name>ATP</name>
        <dbReference type="ChEBI" id="CHEBI:30616"/>
    </ligand>
</feature>
<feature type="binding site" evidence="1">
    <location>
        <position position="170"/>
    </location>
    <ligand>
        <name>ATP</name>
        <dbReference type="ChEBI" id="CHEBI:30616"/>
    </ligand>
</feature>
<feature type="binding site" evidence="1">
    <location>
        <begin position="195"/>
        <end position="196"/>
    </location>
    <ligand>
        <name>ATP</name>
        <dbReference type="ChEBI" id="CHEBI:30616"/>
    </ligand>
</feature>
<organism>
    <name type="scientific">Clostridium kluyveri (strain NBRC 12016)</name>
    <dbReference type="NCBI Taxonomy" id="583346"/>
    <lineage>
        <taxon>Bacteria</taxon>
        <taxon>Bacillati</taxon>
        <taxon>Bacillota</taxon>
        <taxon>Clostridia</taxon>
        <taxon>Eubacteriales</taxon>
        <taxon>Clostridiaceae</taxon>
        <taxon>Clostridium</taxon>
    </lineage>
</organism>
<keyword id="KW-0067">ATP-binding</keyword>
<keyword id="KW-0963">Cytoplasm</keyword>
<keyword id="KW-0436">Ligase</keyword>
<keyword id="KW-0547">Nucleotide-binding</keyword>
<keyword id="KW-0694">RNA-binding</keyword>
<keyword id="KW-0819">tRNA processing</keyword>
<keyword id="KW-0820">tRNA-binding</keyword>
<reference key="1">
    <citation type="submission" date="2005-09" db="EMBL/GenBank/DDBJ databases">
        <title>Complete genome sequence of Clostridium kluyveri and comparative genomics of Clostridia species.</title>
        <authorList>
            <person name="Inui M."/>
            <person name="Nonaka H."/>
            <person name="Shinoda Y."/>
            <person name="Ikenaga Y."/>
            <person name="Abe M."/>
            <person name="Naito K."/>
            <person name="Vertes A.A."/>
            <person name="Yukawa H."/>
        </authorList>
    </citation>
    <scope>NUCLEOTIDE SEQUENCE [LARGE SCALE GENOMIC DNA]</scope>
    <source>
        <strain>NBRC 12016</strain>
    </source>
</reference>
<gene>
    <name evidence="1" type="primary">tmcAL</name>
    <name type="ordered locus">CKR_1285</name>
</gene>
<comment type="function">
    <text evidence="1">Catalyzes the formation of N(4)-acetylcytidine (ac(4)C) at the wobble position of elongator tRNA(Met), using acetate and ATP as substrates. First activates an acetate ion to form acetyladenylate (Ac-AMP) and then transfers the acetyl group to tRNA to form ac(4)C34.</text>
</comment>
<comment type="catalytic activity">
    <reaction evidence="1">
        <text>cytidine(34) in elongator tRNA(Met) + acetate + ATP = N(4)-acetylcytidine(34) in elongator tRNA(Met) + AMP + diphosphate</text>
        <dbReference type="Rhea" id="RHEA:58144"/>
        <dbReference type="Rhea" id="RHEA-COMP:10693"/>
        <dbReference type="Rhea" id="RHEA-COMP:10694"/>
        <dbReference type="ChEBI" id="CHEBI:30089"/>
        <dbReference type="ChEBI" id="CHEBI:30616"/>
        <dbReference type="ChEBI" id="CHEBI:33019"/>
        <dbReference type="ChEBI" id="CHEBI:74900"/>
        <dbReference type="ChEBI" id="CHEBI:82748"/>
        <dbReference type="ChEBI" id="CHEBI:456215"/>
    </reaction>
</comment>
<comment type="subcellular location">
    <subcellularLocation>
        <location evidence="1">Cytoplasm</location>
    </subcellularLocation>
</comment>
<comment type="similarity">
    <text evidence="1">Belongs to the TmcAL family.</text>
</comment>